<protein>
    <recommendedName>
        <fullName evidence="1">Integration host factor subunit alpha</fullName>
        <shortName evidence="1">IHF-alpha</shortName>
    </recommendedName>
</protein>
<evidence type="ECO:0000255" key="1">
    <source>
        <dbReference type="HAMAP-Rule" id="MF_00380"/>
    </source>
</evidence>
<evidence type="ECO:0000256" key="2">
    <source>
        <dbReference type="SAM" id="MobiDB-lite"/>
    </source>
</evidence>
<proteinExistence type="inferred from homology"/>
<organism>
    <name type="scientific">Actinobacillus succinogenes (strain ATCC 55618 / DSM 22257 / CCUG 43843 / 130Z)</name>
    <dbReference type="NCBI Taxonomy" id="339671"/>
    <lineage>
        <taxon>Bacteria</taxon>
        <taxon>Pseudomonadati</taxon>
        <taxon>Pseudomonadota</taxon>
        <taxon>Gammaproteobacteria</taxon>
        <taxon>Pasteurellales</taxon>
        <taxon>Pasteurellaceae</taxon>
        <taxon>Actinobacillus</taxon>
    </lineage>
</organism>
<name>IHFA_ACTSZ</name>
<gene>
    <name evidence="1" type="primary">ihfA</name>
    <name evidence="1" type="synonym">himA</name>
    <name type="ordered locus">Asuc_1418</name>
</gene>
<feature type="chain" id="PRO_1000072171" description="Integration host factor subunit alpha">
    <location>
        <begin position="1"/>
        <end position="98"/>
    </location>
</feature>
<feature type="region of interest" description="Disordered" evidence="2">
    <location>
        <begin position="54"/>
        <end position="74"/>
    </location>
</feature>
<keyword id="KW-0233">DNA recombination</keyword>
<keyword id="KW-0238">DNA-binding</keyword>
<keyword id="KW-1185">Reference proteome</keyword>
<keyword id="KW-0804">Transcription</keyword>
<keyword id="KW-0805">Transcription regulation</keyword>
<keyword id="KW-0810">Translation regulation</keyword>
<sequence length="98" mass="10993">MTLTKVEIAENLTRKLELNKTEAKAMVESFFEEIRATLADGHNVKLSGFGNFELRDKASRPGRNPKTGENIPVSARRVVVFRPGQKLRARVEKSKPKG</sequence>
<dbReference type="EMBL" id="CP000746">
    <property type="protein sequence ID" value="ABR74777.1"/>
    <property type="molecule type" value="Genomic_DNA"/>
</dbReference>
<dbReference type="RefSeq" id="WP_012073154.1">
    <property type="nucleotide sequence ID" value="NC_009655.1"/>
</dbReference>
<dbReference type="SMR" id="A6VP80"/>
<dbReference type="STRING" id="339671.Asuc_1418"/>
<dbReference type="KEGG" id="asu:Asuc_1418"/>
<dbReference type="eggNOG" id="COG0776">
    <property type="taxonomic scope" value="Bacteria"/>
</dbReference>
<dbReference type="HOGENOM" id="CLU_105066_1_0_6"/>
<dbReference type="OrthoDB" id="9797747at2"/>
<dbReference type="Proteomes" id="UP000001114">
    <property type="component" value="Chromosome"/>
</dbReference>
<dbReference type="GO" id="GO:0005829">
    <property type="term" value="C:cytosol"/>
    <property type="evidence" value="ECO:0007669"/>
    <property type="project" value="TreeGrafter"/>
</dbReference>
<dbReference type="GO" id="GO:0003677">
    <property type="term" value="F:DNA binding"/>
    <property type="evidence" value="ECO:0007669"/>
    <property type="project" value="UniProtKB-UniRule"/>
</dbReference>
<dbReference type="GO" id="GO:0030527">
    <property type="term" value="F:structural constituent of chromatin"/>
    <property type="evidence" value="ECO:0007669"/>
    <property type="project" value="InterPro"/>
</dbReference>
<dbReference type="GO" id="GO:0006310">
    <property type="term" value="P:DNA recombination"/>
    <property type="evidence" value="ECO:0007669"/>
    <property type="project" value="UniProtKB-UniRule"/>
</dbReference>
<dbReference type="GO" id="GO:0009893">
    <property type="term" value="P:positive regulation of metabolic process"/>
    <property type="evidence" value="ECO:0007669"/>
    <property type="project" value="UniProtKB-ARBA"/>
</dbReference>
<dbReference type="GO" id="GO:0006355">
    <property type="term" value="P:regulation of DNA-templated transcription"/>
    <property type="evidence" value="ECO:0007669"/>
    <property type="project" value="UniProtKB-UniRule"/>
</dbReference>
<dbReference type="GO" id="GO:0006417">
    <property type="term" value="P:regulation of translation"/>
    <property type="evidence" value="ECO:0007669"/>
    <property type="project" value="UniProtKB-UniRule"/>
</dbReference>
<dbReference type="CDD" id="cd13835">
    <property type="entry name" value="IHF_A"/>
    <property type="match status" value="1"/>
</dbReference>
<dbReference type="FunFam" id="4.10.520.10:FF:000002">
    <property type="entry name" value="Integration host factor subunit alpha"/>
    <property type="match status" value="1"/>
</dbReference>
<dbReference type="Gene3D" id="4.10.520.10">
    <property type="entry name" value="IHF-like DNA-binding proteins"/>
    <property type="match status" value="1"/>
</dbReference>
<dbReference type="HAMAP" id="MF_00380">
    <property type="entry name" value="IHF_alpha"/>
    <property type="match status" value="1"/>
</dbReference>
<dbReference type="InterPro" id="IPR000119">
    <property type="entry name" value="Hist_DNA-bd"/>
</dbReference>
<dbReference type="InterPro" id="IPR020816">
    <property type="entry name" value="Histone-like_DNA-bd_CS"/>
</dbReference>
<dbReference type="InterPro" id="IPR010992">
    <property type="entry name" value="IHF-like_DNA-bd_dom_sf"/>
</dbReference>
<dbReference type="InterPro" id="IPR005684">
    <property type="entry name" value="IHF_alpha"/>
</dbReference>
<dbReference type="NCBIfam" id="TIGR00987">
    <property type="entry name" value="himA"/>
    <property type="match status" value="1"/>
</dbReference>
<dbReference type="NCBIfam" id="NF001401">
    <property type="entry name" value="PRK00285.1"/>
    <property type="match status" value="1"/>
</dbReference>
<dbReference type="PANTHER" id="PTHR33175">
    <property type="entry name" value="DNA-BINDING PROTEIN HU"/>
    <property type="match status" value="1"/>
</dbReference>
<dbReference type="PANTHER" id="PTHR33175:SF2">
    <property type="entry name" value="INTEGRATION HOST FACTOR SUBUNIT ALPHA"/>
    <property type="match status" value="1"/>
</dbReference>
<dbReference type="Pfam" id="PF00216">
    <property type="entry name" value="Bac_DNA_binding"/>
    <property type="match status" value="1"/>
</dbReference>
<dbReference type="PRINTS" id="PR01727">
    <property type="entry name" value="DNABINDINGHU"/>
</dbReference>
<dbReference type="SMART" id="SM00411">
    <property type="entry name" value="BHL"/>
    <property type="match status" value="1"/>
</dbReference>
<dbReference type="SUPFAM" id="SSF47729">
    <property type="entry name" value="IHF-like DNA-binding proteins"/>
    <property type="match status" value="1"/>
</dbReference>
<dbReference type="PROSITE" id="PS00045">
    <property type="entry name" value="HISTONE_LIKE"/>
    <property type="match status" value="1"/>
</dbReference>
<comment type="function">
    <text evidence="1">This protein is one of the two subunits of integration host factor, a specific DNA-binding protein that functions in genetic recombination as well as in transcriptional and translational control.</text>
</comment>
<comment type="subunit">
    <text evidence="1">Heterodimer of an alpha and a beta chain.</text>
</comment>
<comment type="similarity">
    <text evidence="1">Belongs to the bacterial histone-like protein family.</text>
</comment>
<reference key="1">
    <citation type="journal article" date="2010" name="BMC Genomics">
        <title>A genomic perspective on the potential of Actinobacillus succinogenes for industrial succinate production.</title>
        <authorList>
            <person name="McKinlay J.B."/>
            <person name="Laivenieks M."/>
            <person name="Schindler B.D."/>
            <person name="McKinlay A.A."/>
            <person name="Siddaramappa S."/>
            <person name="Challacombe J.F."/>
            <person name="Lowry S.R."/>
            <person name="Clum A."/>
            <person name="Lapidus A.L."/>
            <person name="Burkhart K.B."/>
            <person name="Harkins V."/>
            <person name="Vieille C."/>
        </authorList>
    </citation>
    <scope>NUCLEOTIDE SEQUENCE [LARGE SCALE GENOMIC DNA]</scope>
    <source>
        <strain>ATCC 55618 / DSM 22257 / CCUG 43843 / 130Z</strain>
    </source>
</reference>
<accession>A6VP80</accession>